<evidence type="ECO:0000255" key="1">
    <source>
        <dbReference type="HAMAP-Rule" id="MF_00277"/>
    </source>
</evidence>
<evidence type="ECO:0000255" key="2">
    <source>
        <dbReference type="PROSITE-ProRule" id="PRU01175"/>
    </source>
</evidence>
<accession>Q8PAU4</accession>
<name>GLND_XANCP</name>
<protein>
    <recommendedName>
        <fullName evidence="1">Bifunctional uridylyltransferase/uridylyl-removing enzyme</fullName>
        <shortName evidence="1">UTase/UR</shortName>
    </recommendedName>
    <alternativeName>
        <fullName evidence="1">Bifunctional [protein-PII] modification enzyme</fullName>
    </alternativeName>
    <alternativeName>
        <fullName evidence="1">Bifunctional nitrogen sensor protein</fullName>
    </alternativeName>
    <domain>
        <recommendedName>
            <fullName evidence="1">[Protein-PII] uridylyltransferase</fullName>
            <shortName evidence="1">PII uridylyltransferase</shortName>
            <shortName evidence="1">UTase</shortName>
            <ecNumber evidence="1">2.7.7.59</ecNumber>
        </recommendedName>
    </domain>
    <domain>
        <recommendedName>
            <fullName evidence="1">[Protein-PII]-UMP uridylyl-removing enzyme</fullName>
            <shortName evidence="1">UR</shortName>
            <ecNumber evidence="1">3.1.4.-</ecNumber>
        </recommendedName>
    </domain>
</protein>
<proteinExistence type="inferred from homology"/>
<organism>
    <name type="scientific">Xanthomonas campestris pv. campestris (strain ATCC 33913 / DSM 3586 / NCPPB 528 / LMG 568 / P 25)</name>
    <dbReference type="NCBI Taxonomy" id="190485"/>
    <lineage>
        <taxon>Bacteria</taxon>
        <taxon>Pseudomonadati</taxon>
        <taxon>Pseudomonadota</taxon>
        <taxon>Gammaproteobacteria</taxon>
        <taxon>Lysobacterales</taxon>
        <taxon>Lysobacteraceae</taxon>
        <taxon>Xanthomonas</taxon>
    </lineage>
</organism>
<reference key="1">
    <citation type="journal article" date="2002" name="Nature">
        <title>Comparison of the genomes of two Xanthomonas pathogens with differing host specificities.</title>
        <authorList>
            <person name="da Silva A.C.R."/>
            <person name="Ferro J.A."/>
            <person name="Reinach F.C."/>
            <person name="Farah C.S."/>
            <person name="Furlan L.R."/>
            <person name="Quaggio R.B."/>
            <person name="Monteiro-Vitorello C.B."/>
            <person name="Van Sluys M.A."/>
            <person name="Almeida N.F. Jr."/>
            <person name="Alves L.M.C."/>
            <person name="do Amaral A.M."/>
            <person name="Bertolini M.C."/>
            <person name="Camargo L.E.A."/>
            <person name="Camarotte G."/>
            <person name="Cannavan F."/>
            <person name="Cardozo J."/>
            <person name="Chambergo F."/>
            <person name="Ciapina L.P."/>
            <person name="Cicarelli R.M.B."/>
            <person name="Coutinho L.L."/>
            <person name="Cursino-Santos J.R."/>
            <person name="El-Dorry H."/>
            <person name="Faria J.B."/>
            <person name="Ferreira A.J.S."/>
            <person name="Ferreira R.C.C."/>
            <person name="Ferro M.I.T."/>
            <person name="Formighieri E.F."/>
            <person name="Franco M.C."/>
            <person name="Greggio C.C."/>
            <person name="Gruber A."/>
            <person name="Katsuyama A.M."/>
            <person name="Kishi L.T."/>
            <person name="Leite R.P."/>
            <person name="Lemos E.G.M."/>
            <person name="Lemos M.V.F."/>
            <person name="Locali E.C."/>
            <person name="Machado M.A."/>
            <person name="Madeira A.M.B.N."/>
            <person name="Martinez-Rossi N.M."/>
            <person name="Martins E.C."/>
            <person name="Meidanis J."/>
            <person name="Menck C.F.M."/>
            <person name="Miyaki C.Y."/>
            <person name="Moon D.H."/>
            <person name="Moreira L.M."/>
            <person name="Novo M.T.M."/>
            <person name="Okura V.K."/>
            <person name="Oliveira M.C."/>
            <person name="Oliveira V.R."/>
            <person name="Pereira H.A."/>
            <person name="Rossi A."/>
            <person name="Sena J.A.D."/>
            <person name="Silva C."/>
            <person name="de Souza R.F."/>
            <person name="Spinola L.A.F."/>
            <person name="Takita M.A."/>
            <person name="Tamura R.E."/>
            <person name="Teixeira E.C."/>
            <person name="Tezza R.I.D."/>
            <person name="Trindade dos Santos M."/>
            <person name="Truffi D."/>
            <person name="Tsai S.M."/>
            <person name="White F.F."/>
            <person name="Setubal J.C."/>
            <person name="Kitajima J.P."/>
        </authorList>
    </citation>
    <scope>NUCLEOTIDE SEQUENCE [LARGE SCALE GENOMIC DNA]</scope>
    <source>
        <strain>ATCC 33913 / DSM 3586 / NCPPB 528 / LMG 568 / P 25</strain>
    </source>
</reference>
<sequence>MTATPADRPDPGVAGDADWAAEARPLLVHADMRLCKRFDQGEPTERLLALRARAVDQLMRNAWTRCIPADAGLSLHAVGGYGRGELFPRSDVDLLVLGETAAQQRHEQALARLFALLWDVGLPISHAVRSPAQCTSAAADQTVLTALIESRPLVADAQARAALAAAIAPQQVWPPRAFFQAKREELHARHQRFGDTADNLEPDIKDGPGGLRDLQTLGWMALRAFGVKDLEALVGLGHVGMDEAAALRREREELARLRYGLHLVANRPEERLRFDYQKTLAERLGFADDPESLGVEKMMQRFYRSAALIRRISDRLLQRFEEQFDGEAVPVQLDAGFSLRRGYLTADADTWPDGDVVQVFALFAQWAAHREVRGLHSLTARALAEVLRDLPAYDVADAIARDRFMALLRGPRAVETLNRMARLGVLGQWIPAFASVSGRMQFDLFHVYTVDQHTLMVLRNIALFAAGRADERFSITHEVWPRLRKPELLLLAGLFHDIAKGRGGDHSELGAVDARAFCLAHRLSEGDTELVTWLVEQHLRMSVTAQKQDISDPEVIHRFATLVGTRERLDYLYLLTCADIAGTSPKLWNAWKDRLLADLYFAARRALREGLEHPPPREERLREARESARTLMQAQGHDDATIDRQFAGMPDENFLRFRPEQLAWQAASLIEVQIGQTLVKARRAVPDNDALEVFVYSPDRDGLFSAIVATLDRKGYGIHRARVLDAPHDAIFDVFEVLPQDSSADGDPQRLAAALRQVLAGDLLKVRPSRRAVPRQLRHFRFAPRVEFSESAGGRRTRISLVAPDRPGLLADVAHVLRMQHLRVHDARIATFGERAEDQFQITDEHDRPLPDAARQALRDALCACLDPT</sequence>
<comment type="function">
    <text evidence="1">Modifies, by uridylylation and deuridylylation, the PII regulatory proteins (GlnB and homologs), in response to the nitrogen status of the cell that GlnD senses through the glutamine level. Under low glutamine levels, catalyzes the conversion of the PII proteins and UTP to PII-UMP and PPi, while under higher glutamine levels, GlnD hydrolyzes PII-UMP to PII and UMP (deuridylylation). Thus, controls uridylylation state and activity of the PII proteins, and plays an important role in the regulation of nitrogen assimilation and metabolism.</text>
</comment>
<comment type="catalytic activity">
    <reaction evidence="1">
        <text>[protein-PII]-L-tyrosine + UTP = [protein-PII]-uridylyl-L-tyrosine + diphosphate</text>
        <dbReference type="Rhea" id="RHEA:13673"/>
        <dbReference type="Rhea" id="RHEA-COMP:12147"/>
        <dbReference type="Rhea" id="RHEA-COMP:12148"/>
        <dbReference type="ChEBI" id="CHEBI:33019"/>
        <dbReference type="ChEBI" id="CHEBI:46398"/>
        <dbReference type="ChEBI" id="CHEBI:46858"/>
        <dbReference type="ChEBI" id="CHEBI:90602"/>
        <dbReference type="EC" id="2.7.7.59"/>
    </reaction>
</comment>
<comment type="catalytic activity">
    <reaction evidence="1">
        <text>[protein-PII]-uridylyl-L-tyrosine + H2O = [protein-PII]-L-tyrosine + UMP + H(+)</text>
        <dbReference type="Rhea" id="RHEA:48600"/>
        <dbReference type="Rhea" id="RHEA-COMP:12147"/>
        <dbReference type="Rhea" id="RHEA-COMP:12148"/>
        <dbReference type="ChEBI" id="CHEBI:15377"/>
        <dbReference type="ChEBI" id="CHEBI:15378"/>
        <dbReference type="ChEBI" id="CHEBI:46858"/>
        <dbReference type="ChEBI" id="CHEBI:57865"/>
        <dbReference type="ChEBI" id="CHEBI:90602"/>
    </reaction>
</comment>
<comment type="cofactor">
    <cofactor evidence="1">
        <name>Mg(2+)</name>
        <dbReference type="ChEBI" id="CHEBI:18420"/>
    </cofactor>
</comment>
<comment type="activity regulation">
    <text evidence="1">Uridylyltransferase (UTase) activity is inhibited by glutamine, while glutamine activates uridylyl-removing (UR) activity.</text>
</comment>
<comment type="domain">
    <text evidence="1">Has four distinct domains: an N-terminal nucleotidyltransferase (NT) domain responsible for UTase activity, a central HD domain that encodes UR activity, and two C-terminal ACT domains that seem to have a role in glutamine sensing.</text>
</comment>
<comment type="similarity">
    <text evidence="1">Belongs to the GlnD family.</text>
</comment>
<feature type="chain" id="PRO_0000192777" description="Bifunctional uridylyltransferase/uridylyl-removing enzyme">
    <location>
        <begin position="1"/>
        <end position="869"/>
    </location>
</feature>
<feature type="domain" description="HD" evidence="2">
    <location>
        <begin position="450"/>
        <end position="572"/>
    </location>
</feature>
<feature type="domain" description="ACT 1" evidence="1">
    <location>
        <begin position="692"/>
        <end position="771"/>
    </location>
</feature>
<feature type="domain" description="ACT 2" evidence="1">
    <location>
        <begin position="798"/>
        <end position="869"/>
    </location>
</feature>
<feature type="region of interest" description="Uridylyltransferase">
    <location>
        <begin position="1"/>
        <end position="332"/>
    </location>
</feature>
<feature type="region of interest" description="Uridylyl-removing">
    <location>
        <begin position="333"/>
        <end position="691"/>
    </location>
</feature>
<gene>
    <name evidence="1" type="primary">glnD</name>
    <name type="ordered locus">XCC1383</name>
</gene>
<dbReference type="EC" id="2.7.7.59" evidence="1"/>
<dbReference type="EC" id="3.1.4.-" evidence="1"/>
<dbReference type="EMBL" id="AE008922">
    <property type="protein sequence ID" value="AAM40681.1"/>
    <property type="molecule type" value="Genomic_DNA"/>
</dbReference>
<dbReference type="RefSeq" id="NP_636757.1">
    <property type="nucleotide sequence ID" value="NC_003902.1"/>
</dbReference>
<dbReference type="RefSeq" id="WP_011036575.1">
    <property type="nucleotide sequence ID" value="NC_003902.1"/>
</dbReference>
<dbReference type="SMR" id="Q8PAU4"/>
<dbReference type="STRING" id="190485.XCC1383"/>
<dbReference type="EnsemblBacteria" id="AAM40681">
    <property type="protein sequence ID" value="AAM40681"/>
    <property type="gene ID" value="XCC1383"/>
</dbReference>
<dbReference type="KEGG" id="xcc:XCC1383"/>
<dbReference type="PATRIC" id="fig|190485.4.peg.1486"/>
<dbReference type="eggNOG" id="COG2844">
    <property type="taxonomic scope" value="Bacteria"/>
</dbReference>
<dbReference type="HOGENOM" id="CLU_012833_0_0_6"/>
<dbReference type="OrthoDB" id="9758038at2"/>
<dbReference type="Proteomes" id="UP000001010">
    <property type="component" value="Chromosome"/>
</dbReference>
<dbReference type="GO" id="GO:0008773">
    <property type="term" value="F:[protein-PII] uridylyltransferase activity"/>
    <property type="evidence" value="ECO:0000318"/>
    <property type="project" value="GO_Central"/>
</dbReference>
<dbReference type="GO" id="GO:0008081">
    <property type="term" value="F:phosphoric diester hydrolase activity"/>
    <property type="evidence" value="ECO:0007669"/>
    <property type="project" value="UniProtKB-UniRule"/>
</dbReference>
<dbReference type="GO" id="GO:0006808">
    <property type="term" value="P:regulation of nitrogen utilization"/>
    <property type="evidence" value="ECO:0007669"/>
    <property type="project" value="UniProtKB-UniRule"/>
</dbReference>
<dbReference type="CDD" id="cd04899">
    <property type="entry name" value="ACT_ACR-UUR-like_2"/>
    <property type="match status" value="1"/>
</dbReference>
<dbReference type="CDD" id="cd04900">
    <property type="entry name" value="ACT_UUR-like_1"/>
    <property type="match status" value="1"/>
</dbReference>
<dbReference type="CDD" id="cd00077">
    <property type="entry name" value="HDc"/>
    <property type="match status" value="1"/>
</dbReference>
<dbReference type="CDD" id="cd05401">
    <property type="entry name" value="NT_GlnE_GlnD_like"/>
    <property type="match status" value="1"/>
</dbReference>
<dbReference type="Gene3D" id="3.30.70.260">
    <property type="match status" value="1"/>
</dbReference>
<dbReference type="Gene3D" id="1.10.3090.10">
    <property type="entry name" value="cca-adding enzyme, domain 2"/>
    <property type="match status" value="1"/>
</dbReference>
<dbReference type="HAMAP" id="MF_00277">
    <property type="entry name" value="PII_uridylyl_transf"/>
    <property type="match status" value="1"/>
</dbReference>
<dbReference type="InterPro" id="IPR045865">
    <property type="entry name" value="ACT-like_dom_sf"/>
</dbReference>
<dbReference type="InterPro" id="IPR002912">
    <property type="entry name" value="ACT_dom"/>
</dbReference>
<dbReference type="InterPro" id="IPR003607">
    <property type="entry name" value="HD/PDEase_dom"/>
</dbReference>
<dbReference type="InterPro" id="IPR006674">
    <property type="entry name" value="HD_domain"/>
</dbReference>
<dbReference type="InterPro" id="IPR043519">
    <property type="entry name" value="NT_sf"/>
</dbReference>
<dbReference type="InterPro" id="IPR013546">
    <property type="entry name" value="PII_UdlTrfase/GS_AdlTrfase"/>
</dbReference>
<dbReference type="InterPro" id="IPR002934">
    <property type="entry name" value="Polymerase_NTP_transf_dom"/>
</dbReference>
<dbReference type="InterPro" id="IPR010043">
    <property type="entry name" value="UTase/UR"/>
</dbReference>
<dbReference type="NCBIfam" id="NF003347">
    <property type="entry name" value="PRK04374.1"/>
    <property type="match status" value="1"/>
</dbReference>
<dbReference type="NCBIfam" id="TIGR01693">
    <property type="entry name" value="UTase_glnD"/>
    <property type="match status" value="1"/>
</dbReference>
<dbReference type="PANTHER" id="PTHR47320">
    <property type="entry name" value="BIFUNCTIONAL URIDYLYLTRANSFERASE/URIDYLYL-REMOVING ENZYME"/>
    <property type="match status" value="1"/>
</dbReference>
<dbReference type="PANTHER" id="PTHR47320:SF1">
    <property type="entry name" value="BIFUNCTIONAL URIDYLYLTRANSFERASE_URIDYLYL-REMOVING ENZYME"/>
    <property type="match status" value="1"/>
</dbReference>
<dbReference type="Pfam" id="PF01842">
    <property type="entry name" value="ACT"/>
    <property type="match status" value="1"/>
</dbReference>
<dbReference type="Pfam" id="PF08335">
    <property type="entry name" value="GlnD_UR_UTase"/>
    <property type="match status" value="1"/>
</dbReference>
<dbReference type="Pfam" id="PF01966">
    <property type="entry name" value="HD"/>
    <property type="match status" value="1"/>
</dbReference>
<dbReference type="Pfam" id="PF01909">
    <property type="entry name" value="NTP_transf_2"/>
    <property type="match status" value="1"/>
</dbReference>
<dbReference type="PIRSF" id="PIRSF006288">
    <property type="entry name" value="PII_uridyltransf"/>
    <property type="match status" value="1"/>
</dbReference>
<dbReference type="SMART" id="SM00471">
    <property type="entry name" value="HDc"/>
    <property type="match status" value="1"/>
</dbReference>
<dbReference type="SUPFAM" id="SSF55021">
    <property type="entry name" value="ACT-like"/>
    <property type="match status" value="2"/>
</dbReference>
<dbReference type="SUPFAM" id="SSF109604">
    <property type="entry name" value="HD-domain/PDEase-like"/>
    <property type="match status" value="1"/>
</dbReference>
<dbReference type="SUPFAM" id="SSF81301">
    <property type="entry name" value="Nucleotidyltransferase"/>
    <property type="match status" value="1"/>
</dbReference>
<dbReference type="SUPFAM" id="SSF81593">
    <property type="entry name" value="Nucleotidyltransferase substrate binding subunit/domain"/>
    <property type="match status" value="1"/>
</dbReference>
<dbReference type="PROSITE" id="PS51671">
    <property type="entry name" value="ACT"/>
    <property type="match status" value="2"/>
</dbReference>
<dbReference type="PROSITE" id="PS51831">
    <property type="entry name" value="HD"/>
    <property type="match status" value="1"/>
</dbReference>
<keyword id="KW-0378">Hydrolase</keyword>
<keyword id="KW-0460">Magnesium</keyword>
<keyword id="KW-0511">Multifunctional enzyme</keyword>
<keyword id="KW-0548">Nucleotidyltransferase</keyword>
<keyword id="KW-1185">Reference proteome</keyword>
<keyword id="KW-0677">Repeat</keyword>
<keyword id="KW-0808">Transferase</keyword>